<organism>
    <name type="scientific">Bacillus licheniformis</name>
    <dbReference type="NCBI Taxonomy" id="1402"/>
    <lineage>
        <taxon>Bacteria</taxon>
        <taxon>Bacillati</taxon>
        <taxon>Bacillota</taxon>
        <taxon>Bacilli</taxon>
        <taxon>Bacillales</taxon>
        <taxon>Bacillaceae</taxon>
        <taxon>Bacillus</taxon>
    </lineage>
</organism>
<comment type="catalytic activity">
    <reaction evidence="2">
        <text>Hydrolysis of terminal (1-&gt;4)-linked alpha-D-glucose residues successively from non-reducing ends of the chains with release of beta-D-glucose.</text>
        <dbReference type="EC" id="3.2.1.3"/>
    </reaction>
</comment>
<comment type="biophysicochemical properties">
    <kinetics>
        <text evidence="2">Because of the indeterminate molecular weight of starch, an approximate KM value of 0.2178 mg/ml was determined.</text>
    </kinetics>
    <phDependence>
        <text evidence="2">Optimum pH is 5.0.</text>
    </phDependence>
    <temperatureDependence>
        <text evidence="2">Optimum temperature is 50 degrees Celsius.</text>
    </temperatureDependence>
</comment>
<comment type="miscellaneous">
    <text evidence="2">On the 2D-gel the determined pI of this protein is: 5.0, its MW is: 185 kDa.</text>
</comment>
<dbReference type="EC" id="3.2.1.3" evidence="2"/>
<dbReference type="GO" id="GO:0004339">
    <property type="term" value="F:glucan 1,4-alpha-glucosidase activity"/>
    <property type="evidence" value="ECO:0007669"/>
    <property type="project" value="UniProtKB-EC"/>
</dbReference>
<dbReference type="GO" id="GO:0000272">
    <property type="term" value="P:polysaccharide catabolic process"/>
    <property type="evidence" value="ECO:0007669"/>
    <property type="project" value="UniProtKB-KW"/>
</dbReference>
<sequence length="10" mass="1080">SSNKLTTSWG</sequence>
<accession>C0HJE2</accession>
<reference evidence="4" key="1">
    <citation type="submission" date="2013-08" db="UniProtKB">
        <title>Isolation, purification and characterization of glucoamylase from wild strain of Bacillus licheniformis KIBGE-IB3.</title>
        <authorList>
            <person name="Ghani M."/>
            <person name="Rehman H.U."/>
            <person name="Siddiqui N.N."/>
            <person name="Aman A."/>
            <person name="Qader S.A."/>
        </authorList>
    </citation>
    <scope>PROTEIN SEQUENCE</scope>
    <scope>CATALYTIC ACTIVITY</scope>
    <scope>BIOPHYSICOCHEMICAL PROPERTIES</scope>
    <source>
        <strain evidence="2">KIBGE-IB3</strain>
    </source>
</reference>
<feature type="chain" id="PRO_0000424174" description="Glucoamylase">
    <location>
        <begin position="1"/>
        <end position="10" status="greater than"/>
    </location>
</feature>
<feature type="non-terminal residue" evidence="3">
    <location>
        <position position="10"/>
    </location>
</feature>
<protein>
    <recommendedName>
        <fullName evidence="3">Glucoamylase</fullName>
        <ecNumber evidence="2">3.2.1.3</ecNumber>
    </recommendedName>
    <alternativeName>
        <fullName evidence="1">1,4-alpha-D-glucan glucohydrolase</fullName>
    </alternativeName>
    <alternativeName>
        <fullName evidence="1">Glucan 1,4-alpha-glucosidase</fullName>
    </alternativeName>
</protein>
<proteinExistence type="evidence at protein level"/>
<name>AMYG_BACLI</name>
<keyword id="KW-0119">Carbohydrate metabolism</keyword>
<keyword id="KW-0903">Direct protein sequencing</keyword>
<keyword id="KW-0326">Glycosidase</keyword>
<keyword id="KW-0378">Hydrolase</keyword>
<keyword id="KW-0624">Polysaccharide degradation</keyword>
<evidence type="ECO:0000250" key="1">
    <source>
        <dbReference type="UniProtKB" id="P29761"/>
    </source>
</evidence>
<evidence type="ECO:0000269" key="2">
    <source ref="1"/>
</evidence>
<evidence type="ECO:0000303" key="3">
    <source ref="1"/>
</evidence>
<evidence type="ECO:0000305" key="4"/>